<gene>
    <name type="primary">ROC8</name>
    <name type="synonym">GL2-8</name>
    <name type="ordered locus">Os06g0208100</name>
    <name type="ordered locus">LOC_Os06g10600</name>
    <name type="ORF">P0664C05.15</name>
</gene>
<dbReference type="EMBL" id="AP004758">
    <property type="protein sequence ID" value="BAD35894.1"/>
    <property type="status" value="ALT_SEQ"/>
    <property type="molecule type" value="Genomic_DNA"/>
</dbReference>
<dbReference type="EMBL" id="AP008212">
    <property type="protein sequence ID" value="BAF19016.1"/>
    <property type="status" value="ALT_SEQ"/>
    <property type="molecule type" value="Genomic_DNA"/>
</dbReference>
<dbReference type="EMBL" id="AP014962">
    <property type="status" value="NOT_ANNOTATED_CDS"/>
    <property type="molecule type" value="Genomic_DNA"/>
</dbReference>
<dbReference type="EMBL" id="AB101651">
    <property type="protein sequence ID" value="BAC77161.1"/>
    <property type="molecule type" value="mRNA"/>
</dbReference>
<dbReference type="RefSeq" id="XP_015642098.1">
    <property type="nucleotide sequence ID" value="XM_015786612.1"/>
</dbReference>
<dbReference type="SMR" id="Q69T58"/>
<dbReference type="FunCoup" id="Q69T58">
    <property type="interactions" value="922"/>
</dbReference>
<dbReference type="STRING" id="39947.Q69T58"/>
<dbReference type="PaxDb" id="39947-Q69T58"/>
<dbReference type="EnsemblPlants" id="Os06t0208100-01">
    <property type="protein sequence ID" value="Os06t0208100-01"/>
    <property type="gene ID" value="Os06g0208100"/>
</dbReference>
<dbReference type="Gramene" id="Os06t0208100-01">
    <property type="protein sequence ID" value="Os06t0208100-01"/>
    <property type="gene ID" value="Os06g0208100"/>
</dbReference>
<dbReference type="KEGG" id="dosa:Os06g0208100"/>
<dbReference type="eggNOG" id="ENOG502QQXM">
    <property type="taxonomic scope" value="Eukaryota"/>
</dbReference>
<dbReference type="HOGENOM" id="CLU_015002_3_0_1"/>
<dbReference type="InParanoid" id="Q69T58"/>
<dbReference type="OrthoDB" id="6159439at2759"/>
<dbReference type="Proteomes" id="UP000000763">
    <property type="component" value="Chromosome 6"/>
</dbReference>
<dbReference type="Proteomes" id="UP000059680">
    <property type="component" value="Chromosome 6"/>
</dbReference>
<dbReference type="GO" id="GO:0005634">
    <property type="term" value="C:nucleus"/>
    <property type="evidence" value="ECO:0007669"/>
    <property type="project" value="UniProtKB-SubCell"/>
</dbReference>
<dbReference type="GO" id="GO:0003677">
    <property type="term" value="F:DNA binding"/>
    <property type="evidence" value="ECO:0007669"/>
    <property type="project" value="UniProtKB-KW"/>
</dbReference>
<dbReference type="GO" id="GO:0000981">
    <property type="term" value="F:DNA-binding transcription factor activity, RNA polymerase II-specific"/>
    <property type="evidence" value="ECO:0007669"/>
    <property type="project" value="InterPro"/>
</dbReference>
<dbReference type="GO" id="GO:0008289">
    <property type="term" value="F:lipid binding"/>
    <property type="evidence" value="ECO:0007669"/>
    <property type="project" value="InterPro"/>
</dbReference>
<dbReference type="CDD" id="cd00086">
    <property type="entry name" value="homeodomain"/>
    <property type="match status" value="1"/>
</dbReference>
<dbReference type="CDD" id="cd08875">
    <property type="entry name" value="START_ArGLABRA2_like"/>
    <property type="match status" value="1"/>
</dbReference>
<dbReference type="FunFam" id="1.10.10.60:FF:000229">
    <property type="entry name" value="Homeobox-leucine zipper protein HDG1"/>
    <property type="match status" value="1"/>
</dbReference>
<dbReference type="Gene3D" id="3.30.530.20">
    <property type="match status" value="1"/>
</dbReference>
<dbReference type="Gene3D" id="1.10.10.60">
    <property type="entry name" value="Homeodomain-like"/>
    <property type="match status" value="1"/>
</dbReference>
<dbReference type="InterPro" id="IPR042160">
    <property type="entry name" value="GLABRA2/ANL2/PDF2/ATML1-like"/>
</dbReference>
<dbReference type="InterPro" id="IPR001356">
    <property type="entry name" value="HD"/>
</dbReference>
<dbReference type="InterPro" id="IPR017970">
    <property type="entry name" value="Homeobox_CS"/>
</dbReference>
<dbReference type="InterPro" id="IPR009057">
    <property type="entry name" value="Homeodomain-like_sf"/>
</dbReference>
<dbReference type="InterPro" id="IPR023393">
    <property type="entry name" value="START-like_dom_sf"/>
</dbReference>
<dbReference type="InterPro" id="IPR002913">
    <property type="entry name" value="START_lipid-bd_dom"/>
</dbReference>
<dbReference type="PANTHER" id="PTHR45654">
    <property type="entry name" value="HOMEOBOX-LEUCINE ZIPPER PROTEIN MERISTEM L1"/>
    <property type="match status" value="1"/>
</dbReference>
<dbReference type="PANTHER" id="PTHR45654:SF12">
    <property type="entry name" value="HOMEOBOX-LEUCINE ZIPPER PROTEIN ROC8"/>
    <property type="match status" value="1"/>
</dbReference>
<dbReference type="Pfam" id="PF00046">
    <property type="entry name" value="Homeodomain"/>
    <property type="match status" value="1"/>
</dbReference>
<dbReference type="Pfam" id="PF01852">
    <property type="entry name" value="START"/>
    <property type="match status" value="1"/>
</dbReference>
<dbReference type="SMART" id="SM00389">
    <property type="entry name" value="HOX"/>
    <property type="match status" value="1"/>
</dbReference>
<dbReference type="SMART" id="SM00234">
    <property type="entry name" value="START"/>
    <property type="match status" value="1"/>
</dbReference>
<dbReference type="SUPFAM" id="SSF55961">
    <property type="entry name" value="Bet v1-like"/>
    <property type="match status" value="2"/>
</dbReference>
<dbReference type="SUPFAM" id="SSF46689">
    <property type="entry name" value="Homeodomain-like"/>
    <property type="match status" value="1"/>
</dbReference>
<dbReference type="PROSITE" id="PS00027">
    <property type="entry name" value="HOMEOBOX_1"/>
    <property type="match status" value="1"/>
</dbReference>
<dbReference type="PROSITE" id="PS50071">
    <property type="entry name" value="HOMEOBOX_2"/>
    <property type="match status" value="1"/>
</dbReference>
<dbReference type="PROSITE" id="PS50848">
    <property type="entry name" value="START"/>
    <property type="match status" value="1"/>
</dbReference>
<keyword id="KW-0175">Coiled coil</keyword>
<keyword id="KW-0238">DNA-binding</keyword>
<keyword id="KW-0371">Homeobox</keyword>
<keyword id="KW-0539">Nucleus</keyword>
<keyword id="KW-1185">Reference proteome</keyword>
<keyword id="KW-0804">Transcription</keyword>
<keyword id="KW-0805">Transcription regulation</keyword>
<accession>Q69T58</accession>
<accession>Q0DDQ7</accession>
<accession>Q7Y0V5</accession>
<sequence length="710" mass="76862">MDFGDEPEGSDSQRRRKRYHRHTPRQIQQLEAMFKECPHPDENQRAQLSRELGLEPRQIKFWFQNRRTQMKAQHERADNCFLRAENDKIRCENIAIREALKNVICPTCGGPPVGEDYFDEQKLRMENARLKEELDRVSNLTSKYLGRPFTQLPPATPPMTVSSLDLSVGGMGGPSLDLDLLSGGSSGIPFQLPAPVSDMERPMMAEMATRAMDELIRLAQAGDHIWSKSPGGGVSGGDARETLNVDTYDSIFSKPGGSYRAPSINVEGSRESGLVLMSAVALADVFMDTNKWMEFFPSIVSKAHTIDVLVNGMGGRSESLILMYEELHIMTPAVPTREVNFVRYCRQIEQGLWAIADVSVDLQRDAHFGAPPPRSRRLPSGCLIADMANGYSKVTWVEHMEVEEKSPINVLYRDLVLSGAAFGAHRWLAALQRACERYASLVALGVPHHIAGVTPEGKRSMMKLSQRMVNSFCSSLGASQMHQWTTLSGSNEVSVRVTMHRSTDPGQPNGVVLSAATSIWLPVPCDHVFAFVRDENTRSQWDVLSHGNQVQEVSRIPNGSNPGNCISLLRGLNASQNSMLILQESCTDASGSLVVYSPIDIPAANVVMSGEDPSSIPLLPSGFTILPDGRPGSAAGASTSSAGPLAAARGGGGGGAGGGSVVTVAFQILVSSLPSSKLNAESVATVNGLITTTVEQIKAALNCSAHGHHP</sequence>
<protein>
    <recommendedName>
        <fullName>Homeobox-leucine zipper protein ROC8</fullName>
    </recommendedName>
    <alternativeName>
        <fullName>GLABRA 2-like homeobox protein 8</fullName>
    </alternativeName>
    <alternativeName>
        <fullName>HD-ZIP protein ROC8</fullName>
    </alternativeName>
    <alternativeName>
        <fullName>Homeodomain transcription factor ROC8</fullName>
    </alternativeName>
    <alternativeName>
        <fullName>Protein RICE OUTERMOST CELL-SPECIFIC 8</fullName>
    </alternativeName>
</protein>
<feature type="chain" id="PRO_0000331746" description="Homeobox-leucine zipper protein ROC8">
    <location>
        <begin position="1"/>
        <end position="710"/>
    </location>
</feature>
<feature type="domain" description="START" evidence="4">
    <location>
        <begin position="197"/>
        <end position="440"/>
    </location>
</feature>
<feature type="DNA-binding region" description="Homeobox" evidence="3">
    <location>
        <begin position="15"/>
        <end position="74"/>
    </location>
</feature>
<feature type="region of interest" description="Disordered" evidence="5">
    <location>
        <begin position="1"/>
        <end position="23"/>
    </location>
</feature>
<feature type="region of interest" description="Disordered" evidence="5">
    <location>
        <begin position="630"/>
        <end position="650"/>
    </location>
</feature>
<feature type="coiled-coil region" evidence="2">
    <location>
        <begin position="82"/>
        <end position="144"/>
    </location>
</feature>
<feature type="compositionally biased region" description="Basic residues" evidence="5">
    <location>
        <begin position="14"/>
        <end position="23"/>
    </location>
</feature>
<feature type="compositionally biased region" description="Low complexity" evidence="5">
    <location>
        <begin position="630"/>
        <end position="648"/>
    </location>
</feature>
<organism>
    <name type="scientific">Oryza sativa subsp. japonica</name>
    <name type="common">Rice</name>
    <dbReference type="NCBI Taxonomy" id="39947"/>
    <lineage>
        <taxon>Eukaryota</taxon>
        <taxon>Viridiplantae</taxon>
        <taxon>Streptophyta</taxon>
        <taxon>Embryophyta</taxon>
        <taxon>Tracheophyta</taxon>
        <taxon>Spermatophyta</taxon>
        <taxon>Magnoliopsida</taxon>
        <taxon>Liliopsida</taxon>
        <taxon>Poales</taxon>
        <taxon>Poaceae</taxon>
        <taxon>BOP clade</taxon>
        <taxon>Oryzoideae</taxon>
        <taxon>Oryzeae</taxon>
        <taxon>Oryzinae</taxon>
        <taxon>Oryza</taxon>
        <taxon>Oryza sativa</taxon>
    </lineage>
</organism>
<proteinExistence type="evidence at transcript level"/>
<evidence type="ECO:0000250" key="1"/>
<evidence type="ECO:0000255" key="2"/>
<evidence type="ECO:0000255" key="3">
    <source>
        <dbReference type="PROSITE-ProRule" id="PRU00108"/>
    </source>
</evidence>
<evidence type="ECO:0000255" key="4">
    <source>
        <dbReference type="PROSITE-ProRule" id="PRU00197"/>
    </source>
</evidence>
<evidence type="ECO:0000256" key="5">
    <source>
        <dbReference type="SAM" id="MobiDB-lite"/>
    </source>
</evidence>
<evidence type="ECO:0000305" key="6"/>
<comment type="function">
    <text evidence="1">Probable transcription factor.</text>
</comment>
<comment type="subcellular location">
    <subcellularLocation>
        <location evidence="6">Nucleus</location>
    </subcellularLocation>
</comment>
<comment type="similarity">
    <text evidence="6">Belongs to the HD-ZIP homeobox family. Class IV subfamily.</text>
</comment>
<comment type="sequence caution" evidence="6">
    <conflict type="erroneous gene model prediction">
        <sequence resource="EMBL-CDS" id="BAD35894"/>
    </conflict>
</comment>
<comment type="sequence caution" evidence="6">
    <conflict type="erroneous gene model prediction">
        <sequence resource="EMBL-CDS" id="BAF19016"/>
    </conflict>
</comment>
<name>ROC8_ORYSJ</name>
<reference key="1">
    <citation type="journal article" date="2005" name="Nature">
        <title>The map-based sequence of the rice genome.</title>
        <authorList>
            <consortium name="International rice genome sequencing project (IRGSP)"/>
        </authorList>
    </citation>
    <scope>NUCLEOTIDE SEQUENCE [LARGE SCALE GENOMIC DNA]</scope>
    <source>
        <strain>cv. Nipponbare</strain>
    </source>
</reference>
<reference key="2">
    <citation type="journal article" date="2008" name="Nucleic Acids Res.">
        <title>The rice annotation project database (RAP-DB): 2008 update.</title>
        <authorList>
            <consortium name="The rice annotation project (RAP)"/>
        </authorList>
    </citation>
    <scope>GENOME REANNOTATION</scope>
    <source>
        <strain>cv. Nipponbare</strain>
    </source>
</reference>
<reference key="3">
    <citation type="journal article" date="2013" name="Rice">
        <title>Improvement of the Oryza sativa Nipponbare reference genome using next generation sequence and optical map data.</title>
        <authorList>
            <person name="Kawahara Y."/>
            <person name="de la Bastide M."/>
            <person name="Hamilton J.P."/>
            <person name="Kanamori H."/>
            <person name="McCombie W.R."/>
            <person name="Ouyang S."/>
            <person name="Schwartz D.C."/>
            <person name="Tanaka T."/>
            <person name="Wu J."/>
            <person name="Zhou S."/>
            <person name="Childs K.L."/>
            <person name="Davidson R.M."/>
            <person name="Lin H."/>
            <person name="Quesada-Ocampo L."/>
            <person name="Vaillancourt B."/>
            <person name="Sakai H."/>
            <person name="Lee S.S."/>
            <person name="Kim J."/>
            <person name="Numa H."/>
            <person name="Itoh T."/>
            <person name="Buell C.R."/>
            <person name="Matsumoto T."/>
        </authorList>
    </citation>
    <scope>GENOME REANNOTATION</scope>
    <source>
        <strain>cv. Nipponbare</strain>
    </source>
</reference>
<reference key="4">
    <citation type="submission" date="2003-01" db="EMBL/GenBank/DDBJ databases">
        <title>The roles of rice GL2-type homeobox genes in epidermis differentiation.</title>
        <authorList>
            <person name="Ito M."/>
            <person name="Sentoku N."/>
            <person name="Nishimura A."/>
            <person name="Hong S.-K."/>
            <person name="Sato Y."/>
            <person name="Matsuoka M."/>
        </authorList>
    </citation>
    <scope>NUCLEOTIDE SEQUENCE [MRNA] OF 15-143</scope>
</reference>